<evidence type="ECO:0000250" key="1"/>
<evidence type="ECO:0000250" key="2">
    <source>
        <dbReference type="UniProtKB" id="D0VWV4"/>
    </source>
</evidence>
<evidence type="ECO:0000255" key="3"/>
<evidence type="ECO:0000305" key="4"/>
<sequence length="192" mass="21379">MFGRTLNTFTSRNAPLVRNFDKFIVNNTLTSKNIYLSQTNTTNTPLSYSTQAKKPFTITEKRIDELKTPYQPTSPHLTIYKFPLPAVMSIMHRATGICLALGITGLAGVTLFAPHDAIHYIQLLHTQYPALVYPAKFAVALPLTYHFCTGVRHIIWDETVKGLSISQIESSGKVLLAVVAVLSTIFTFVSFK</sequence>
<keyword id="KW-0249">Electron transport</keyword>
<keyword id="KW-0349">Heme</keyword>
<keyword id="KW-0408">Iron</keyword>
<keyword id="KW-0472">Membrane</keyword>
<keyword id="KW-0479">Metal-binding</keyword>
<keyword id="KW-0496">Mitochondrion</keyword>
<keyword id="KW-0999">Mitochondrion inner membrane</keyword>
<keyword id="KW-1185">Reference proteome</keyword>
<keyword id="KW-0809">Transit peptide</keyword>
<keyword id="KW-0812">Transmembrane</keyword>
<keyword id="KW-1133">Transmembrane helix</keyword>
<keyword id="KW-0813">Transport</keyword>
<keyword id="KW-0816">Tricarboxylic acid cycle</keyword>
<gene>
    <name type="primary">sdhC</name>
    <name type="ORF">DDB_G0275115</name>
</gene>
<comment type="function">
    <text evidence="1">Membrane-anchoring subunit of succinate dehydrogenase (SDH) that is involved in complex II of the mitochondrial electron transport chain and is responsible for transferring electrons from succinate to ubiquinone (coenzyme Q).</text>
</comment>
<comment type="cofactor">
    <cofactor evidence="2">
        <name>heme b</name>
        <dbReference type="ChEBI" id="CHEBI:60344"/>
    </cofactor>
    <text evidence="2">The heme b is bound between the two transmembrane cytochrome b560 subunits.</text>
</comment>
<comment type="pathway">
    <text>Carbohydrate metabolism; tricarboxylic acid cycle.</text>
</comment>
<comment type="subunit">
    <text evidence="1">Component of complex II composed of four subunits: the flavoprotein (FP) sdha, iron-sulfur protein (IP) sdhb, and a cytochrome b560 composed of sdhc and sdhd.</text>
</comment>
<comment type="subcellular location">
    <subcellularLocation>
        <location evidence="1">Mitochondrion inner membrane</location>
        <topology evidence="1">Multi-pass membrane protein</topology>
    </subcellularLocation>
</comment>
<comment type="similarity">
    <text evidence="4">Belongs to the cytochrome b560 family.</text>
</comment>
<dbReference type="EMBL" id="AAFI02000013">
    <property type="protein sequence ID" value="EAL69838.1"/>
    <property type="molecule type" value="Genomic_DNA"/>
</dbReference>
<dbReference type="RefSeq" id="XP_643757.1">
    <property type="nucleotide sequence ID" value="XM_638665.1"/>
</dbReference>
<dbReference type="SMR" id="Q8T2T5"/>
<dbReference type="FunCoup" id="Q8T2T5">
    <property type="interactions" value="263"/>
</dbReference>
<dbReference type="STRING" id="44689.Q8T2T5"/>
<dbReference type="PaxDb" id="44689-DDB0231385"/>
<dbReference type="EnsemblProtists" id="EAL69838">
    <property type="protein sequence ID" value="EAL69838"/>
    <property type="gene ID" value="DDB_G0275115"/>
</dbReference>
<dbReference type="GeneID" id="8619802"/>
<dbReference type="KEGG" id="ddi:DDB_G0275115"/>
<dbReference type="dictyBase" id="DDB_G0275115">
    <property type="gene designation" value="sdhC"/>
</dbReference>
<dbReference type="VEuPathDB" id="AmoebaDB:DDB_G0275115"/>
<dbReference type="eggNOG" id="KOG0449">
    <property type="taxonomic scope" value="Eukaryota"/>
</dbReference>
<dbReference type="HOGENOM" id="CLU_1417530_0_0_1"/>
<dbReference type="InParanoid" id="Q8T2T5"/>
<dbReference type="OMA" id="MIGRTIL"/>
<dbReference type="PhylomeDB" id="Q8T2T5"/>
<dbReference type="Reactome" id="R-DDI-71403">
    <property type="pathway name" value="Citric acid cycle (TCA cycle)"/>
</dbReference>
<dbReference type="UniPathway" id="UPA00223"/>
<dbReference type="PRO" id="PR:Q8T2T5"/>
<dbReference type="Proteomes" id="UP000002195">
    <property type="component" value="Chromosome 2"/>
</dbReference>
<dbReference type="GO" id="GO:0005743">
    <property type="term" value="C:mitochondrial inner membrane"/>
    <property type="evidence" value="ECO:0000250"/>
    <property type="project" value="UniProtKB"/>
</dbReference>
<dbReference type="GO" id="GO:0045273">
    <property type="term" value="C:respiratory chain complex II (succinate dehydrogenase)"/>
    <property type="evidence" value="ECO:0000250"/>
    <property type="project" value="UniProtKB"/>
</dbReference>
<dbReference type="GO" id="GO:0009055">
    <property type="term" value="F:electron transfer activity"/>
    <property type="evidence" value="ECO:0007669"/>
    <property type="project" value="InterPro"/>
</dbReference>
<dbReference type="GO" id="GO:0020037">
    <property type="term" value="F:heme binding"/>
    <property type="evidence" value="ECO:0000250"/>
    <property type="project" value="UniProtKB"/>
</dbReference>
<dbReference type="GO" id="GO:0046872">
    <property type="term" value="F:metal ion binding"/>
    <property type="evidence" value="ECO:0007669"/>
    <property type="project" value="UniProtKB-KW"/>
</dbReference>
<dbReference type="GO" id="GO:0006121">
    <property type="term" value="P:mitochondrial electron transport, succinate to ubiquinone"/>
    <property type="evidence" value="ECO:0000318"/>
    <property type="project" value="GO_Central"/>
</dbReference>
<dbReference type="GO" id="GO:0006099">
    <property type="term" value="P:tricarboxylic acid cycle"/>
    <property type="evidence" value="ECO:0007669"/>
    <property type="project" value="UniProtKB-UniPathway"/>
</dbReference>
<dbReference type="CDD" id="cd03499">
    <property type="entry name" value="SQR_TypeC_SdhC"/>
    <property type="match status" value="1"/>
</dbReference>
<dbReference type="Gene3D" id="1.20.1300.10">
    <property type="entry name" value="Fumarate reductase/succinate dehydrogenase, transmembrane subunit"/>
    <property type="match status" value="1"/>
</dbReference>
<dbReference type="InterPro" id="IPR034804">
    <property type="entry name" value="SQR/QFR_C/D"/>
</dbReference>
<dbReference type="InterPro" id="IPR014314">
    <property type="entry name" value="Succ_DH_cytb556"/>
</dbReference>
<dbReference type="InterPro" id="IPR000701">
    <property type="entry name" value="SuccDH_FuR_B_TM-su"/>
</dbReference>
<dbReference type="NCBIfam" id="TIGR02970">
    <property type="entry name" value="succ_dehyd_cytB"/>
    <property type="match status" value="1"/>
</dbReference>
<dbReference type="PANTHER" id="PTHR10978">
    <property type="entry name" value="SUCCINATE DEHYDROGENASE CYTOCHROME B560 SUBUNIT"/>
    <property type="match status" value="1"/>
</dbReference>
<dbReference type="PANTHER" id="PTHR10978:SF5">
    <property type="entry name" value="SUCCINATE DEHYDROGENASE CYTOCHROME B560 SUBUNIT, MITOCHONDRIAL"/>
    <property type="match status" value="1"/>
</dbReference>
<dbReference type="Pfam" id="PF01127">
    <property type="entry name" value="Sdh_cyt"/>
    <property type="match status" value="1"/>
</dbReference>
<dbReference type="SUPFAM" id="SSF81343">
    <property type="entry name" value="Fumarate reductase respiratory complex transmembrane subunits"/>
    <property type="match status" value="1"/>
</dbReference>
<protein>
    <recommendedName>
        <fullName>Succinate dehydrogenase cytochrome b560 subunit, mitochondrial</fullName>
    </recommendedName>
</protein>
<reference key="1">
    <citation type="journal article" date="2002" name="Nature">
        <title>Sequence and analysis of chromosome 2 of Dictyostelium discoideum.</title>
        <authorList>
            <person name="Gloeckner G."/>
            <person name="Eichinger L."/>
            <person name="Szafranski K."/>
            <person name="Pachebat J.A."/>
            <person name="Bankier A.T."/>
            <person name="Dear P.H."/>
            <person name="Lehmann R."/>
            <person name="Baumgart C."/>
            <person name="Parra G."/>
            <person name="Abril J.F."/>
            <person name="Guigo R."/>
            <person name="Kumpf K."/>
            <person name="Tunggal B."/>
            <person name="Cox E.C."/>
            <person name="Quail M.A."/>
            <person name="Platzer M."/>
            <person name="Rosenthal A."/>
            <person name="Noegel A.A."/>
        </authorList>
    </citation>
    <scope>NUCLEOTIDE SEQUENCE [LARGE SCALE GENOMIC DNA]</scope>
    <source>
        <strain>AX4</strain>
    </source>
</reference>
<reference key="2">
    <citation type="journal article" date="2005" name="Nature">
        <title>The genome of the social amoeba Dictyostelium discoideum.</title>
        <authorList>
            <person name="Eichinger L."/>
            <person name="Pachebat J.A."/>
            <person name="Gloeckner G."/>
            <person name="Rajandream M.A."/>
            <person name="Sucgang R."/>
            <person name="Berriman M."/>
            <person name="Song J."/>
            <person name="Olsen R."/>
            <person name="Szafranski K."/>
            <person name="Xu Q."/>
            <person name="Tunggal B."/>
            <person name="Kummerfeld S."/>
            <person name="Madera M."/>
            <person name="Konfortov B.A."/>
            <person name="Rivero F."/>
            <person name="Bankier A.T."/>
            <person name="Lehmann R."/>
            <person name="Hamlin N."/>
            <person name="Davies R."/>
            <person name="Gaudet P."/>
            <person name="Fey P."/>
            <person name="Pilcher K."/>
            <person name="Chen G."/>
            <person name="Saunders D."/>
            <person name="Sodergren E.J."/>
            <person name="Davis P."/>
            <person name="Kerhornou A."/>
            <person name="Nie X."/>
            <person name="Hall N."/>
            <person name="Anjard C."/>
            <person name="Hemphill L."/>
            <person name="Bason N."/>
            <person name="Farbrother P."/>
            <person name="Desany B."/>
            <person name="Just E."/>
            <person name="Morio T."/>
            <person name="Rost R."/>
            <person name="Churcher C.M."/>
            <person name="Cooper J."/>
            <person name="Haydock S."/>
            <person name="van Driessche N."/>
            <person name="Cronin A."/>
            <person name="Goodhead I."/>
            <person name="Muzny D.M."/>
            <person name="Mourier T."/>
            <person name="Pain A."/>
            <person name="Lu M."/>
            <person name="Harper D."/>
            <person name="Lindsay R."/>
            <person name="Hauser H."/>
            <person name="James K.D."/>
            <person name="Quiles M."/>
            <person name="Madan Babu M."/>
            <person name="Saito T."/>
            <person name="Buchrieser C."/>
            <person name="Wardroper A."/>
            <person name="Felder M."/>
            <person name="Thangavelu M."/>
            <person name="Johnson D."/>
            <person name="Knights A."/>
            <person name="Loulseged H."/>
            <person name="Mungall K.L."/>
            <person name="Oliver K."/>
            <person name="Price C."/>
            <person name="Quail M.A."/>
            <person name="Urushihara H."/>
            <person name="Hernandez J."/>
            <person name="Rabbinowitsch E."/>
            <person name="Steffen D."/>
            <person name="Sanders M."/>
            <person name="Ma J."/>
            <person name="Kohara Y."/>
            <person name="Sharp S."/>
            <person name="Simmonds M.N."/>
            <person name="Spiegler S."/>
            <person name="Tivey A."/>
            <person name="Sugano S."/>
            <person name="White B."/>
            <person name="Walker D."/>
            <person name="Woodward J.R."/>
            <person name="Winckler T."/>
            <person name="Tanaka Y."/>
            <person name="Shaulsky G."/>
            <person name="Schleicher M."/>
            <person name="Weinstock G.M."/>
            <person name="Rosenthal A."/>
            <person name="Cox E.C."/>
            <person name="Chisholm R.L."/>
            <person name="Gibbs R.A."/>
            <person name="Loomis W.F."/>
            <person name="Platzer M."/>
            <person name="Kay R.R."/>
            <person name="Williams J.G."/>
            <person name="Dear P.H."/>
            <person name="Noegel A.A."/>
            <person name="Barrell B.G."/>
            <person name="Kuspa A."/>
        </authorList>
    </citation>
    <scope>NUCLEOTIDE SEQUENCE [LARGE SCALE GENOMIC DNA]</scope>
    <source>
        <strain>AX4</strain>
    </source>
</reference>
<proteinExistence type="inferred from homology"/>
<feature type="transit peptide" description="Mitochondrion" evidence="3">
    <location>
        <begin position="1"/>
        <end position="27"/>
    </location>
</feature>
<feature type="chain" id="PRO_0000327439" description="Succinate dehydrogenase cytochrome b560 subunit, mitochondrial">
    <location>
        <begin position="28"/>
        <end position="192"/>
    </location>
</feature>
<feature type="topological domain" description="Mitochondrial matrix" evidence="1">
    <location>
        <begin position="48"/>
        <end position="83"/>
    </location>
</feature>
<feature type="transmembrane region" description="Helical" evidence="1">
    <location>
        <begin position="84"/>
        <end position="113"/>
    </location>
</feature>
<feature type="topological domain" description="Mitochondrial intermembrane" evidence="1">
    <location>
        <begin position="114"/>
        <end position="131"/>
    </location>
</feature>
<feature type="transmembrane region" description="Helical" evidence="1">
    <location>
        <begin position="132"/>
        <end position="156"/>
    </location>
</feature>
<feature type="topological domain" description="Mitochondrial matrix" evidence="1">
    <location>
        <begin position="157"/>
        <end position="164"/>
    </location>
</feature>
<feature type="transmembrane region" description="Helical" evidence="1">
    <location>
        <begin position="165"/>
        <end position="186"/>
    </location>
</feature>
<feature type="topological domain" description="Mitochondrial intermembrane" evidence="1">
    <location>
        <begin position="187"/>
        <end position="189"/>
    </location>
</feature>
<feature type="binding site" description="axial binding residue" evidence="2">
    <location>
        <position position="146"/>
    </location>
    <ligand>
        <name>heme b</name>
        <dbReference type="ChEBI" id="CHEBI:60344"/>
        <note>ligand shared with sdhd</note>
    </ligand>
    <ligandPart>
        <name>Fe</name>
        <dbReference type="ChEBI" id="CHEBI:18248"/>
    </ligandPart>
</feature>
<organism>
    <name type="scientific">Dictyostelium discoideum</name>
    <name type="common">Social amoeba</name>
    <dbReference type="NCBI Taxonomy" id="44689"/>
    <lineage>
        <taxon>Eukaryota</taxon>
        <taxon>Amoebozoa</taxon>
        <taxon>Evosea</taxon>
        <taxon>Eumycetozoa</taxon>
        <taxon>Dictyostelia</taxon>
        <taxon>Dictyosteliales</taxon>
        <taxon>Dictyosteliaceae</taxon>
        <taxon>Dictyostelium</taxon>
    </lineage>
</organism>
<accession>Q8T2T5</accession>
<accession>Q554F4</accession>
<name>C560_DICDI</name>